<reference key="1">
    <citation type="journal article" date="2008" name="PLoS ONE">
        <title>Comparative analysis of Acinetobacters: three genomes for three lifestyles.</title>
        <authorList>
            <person name="Vallenet D."/>
            <person name="Nordmann P."/>
            <person name="Barbe V."/>
            <person name="Poirel L."/>
            <person name="Mangenot S."/>
            <person name="Bataille E."/>
            <person name="Dossat C."/>
            <person name="Gas S."/>
            <person name="Kreimeyer A."/>
            <person name="Lenoble P."/>
            <person name="Oztas S."/>
            <person name="Poulain J."/>
            <person name="Segurens B."/>
            <person name="Robert C."/>
            <person name="Abergel C."/>
            <person name="Claverie J.-M."/>
            <person name="Raoult D."/>
            <person name="Medigue C."/>
            <person name="Weissenbach J."/>
            <person name="Cruveiller S."/>
        </authorList>
    </citation>
    <scope>NUCLEOTIDE SEQUENCE [LARGE SCALE GENOMIC DNA]</scope>
    <source>
        <strain>SDF</strain>
    </source>
</reference>
<protein>
    <recommendedName>
        <fullName evidence="1">tRNA-cytidine(32) 2-sulfurtransferase</fullName>
        <ecNumber evidence="1">2.8.1.-</ecNumber>
    </recommendedName>
    <alternativeName>
        <fullName evidence="1">Two-thiocytidine biosynthesis protein A</fullName>
    </alternativeName>
    <alternativeName>
        <fullName evidence="1">tRNA 2-thiocytidine biosynthesis protein TtcA</fullName>
    </alternativeName>
</protein>
<proteinExistence type="inferred from homology"/>
<comment type="function">
    <text evidence="1">Catalyzes the ATP-dependent 2-thiolation of cytidine in position 32 of tRNA, to form 2-thiocytidine (s(2)C32). The sulfur atoms are provided by the cysteine/cysteine desulfurase (IscS) system.</text>
</comment>
<comment type="catalytic activity">
    <reaction evidence="1">
        <text>cytidine(32) in tRNA + S-sulfanyl-L-cysteinyl-[cysteine desulfurase] + AH2 + ATP = 2-thiocytidine(32) in tRNA + L-cysteinyl-[cysteine desulfurase] + A + AMP + diphosphate + H(+)</text>
        <dbReference type="Rhea" id="RHEA:57048"/>
        <dbReference type="Rhea" id="RHEA-COMP:10288"/>
        <dbReference type="Rhea" id="RHEA-COMP:12157"/>
        <dbReference type="Rhea" id="RHEA-COMP:12158"/>
        <dbReference type="Rhea" id="RHEA-COMP:14821"/>
        <dbReference type="ChEBI" id="CHEBI:13193"/>
        <dbReference type="ChEBI" id="CHEBI:15378"/>
        <dbReference type="ChEBI" id="CHEBI:17499"/>
        <dbReference type="ChEBI" id="CHEBI:29950"/>
        <dbReference type="ChEBI" id="CHEBI:30616"/>
        <dbReference type="ChEBI" id="CHEBI:33019"/>
        <dbReference type="ChEBI" id="CHEBI:61963"/>
        <dbReference type="ChEBI" id="CHEBI:82748"/>
        <dbReference type="ChEBI" id="CHEBI:141453"/>
        <dbReference type="ChEBI" id="CHEBI:456215"/>
    </reaction>
    <physiologicalReaction direction="left-to-right" evidence="1">
        <dbReference type="Rhea" id="RHEA:57049"/>
    </physiologicalReaction>
</comment>
<comment type="cofactor">
    <cofactor evidence="1">
        <name>Mg(2+)</name>
        <dbReference type="ChEBI" id="CHEBI:18420"/>
    </cofactor>
</comment>
<comment type="cofactor">
    <cofactor evidence="1">
        <name>[4Fe-4S] cluster</name>
        <dbReference type="ChEBI" id="CHEBI:49883"/>
    </cofactor>
    <text evidence="1">Binds 1 [4Fe-4S] cluster per subunit. The cluster is chelated by three Cys residues, the fourth Fe has a free coordination site that may bind a sulfur atom transferred from the persulfide of IscS.</text>
</comment>
<comment type="pathway">
    <text evidence="1">tRNA modification.</text>
</comment>
<comment type="subunit">
    <text evidence="1">Homodimer.</text>
</comment>
<comment type="subcellular location">
    <subcellularLocation>
        <location evidence="1">Cytoplasm</location>
    </subcellularLocation>
</comment>
<comment type="miscellaneous">
    <text evidence="1">The thiolation reaction likely consists of two steps: a first activation step by ATP to form an adenylated intermediate of the target base of tRNA, and a second nucleophilic substitution step of the sulfur (S) atom supplied by the hydrosulfide attached to the Fe-S cluster.</text>
</comment>
<comment type="similarity">
    <text evidence="1">Belongs to the TtcA family.</text>
</comment>
<gene>
    <name evidence="1" type="primary">ttcA</name>
    <name type="ordered locus">ABSDF0830</name>
</gene>
<dbReference type="EC" id="2.8.1.-" evidence="1"/>
<dbReference type="EMBL" id="CU468230">
    <property type="protein sequence ID" value="CAP00197.1"/>
    <property type="molecule type" value="Genomic_DNA"/>
</dbReference>
<dbReference type="SMR" id="B0VT10"/>
<dbReference type="KEGG" id="abm:ABSDF0830"/>
<dbReference type="HOGENOM" id="CLU_026481_0_0_6"/>
<dbReference type="Proteomes" id="UP000001741">
    <property type="component" value="Chromosome"/>
</dbReference>
<dbReference type="GO" id="GO:0005737">
    <property type="term" value="C:cytoplasm"/>
    <property type="evidence" value="ECO:0007669"/>
    <property type="project" value="UniProtKB-SubCell"/>
</dbReference>
<dbReference type="GO" id="GO:0051539">
    <property type="term" value="F:4 iron, 4 sulfur cluster binding"/>
    <property type="evidence" value="ECO:0007669"/>
    <property type="project" value="UniProtKB-UniRule"/>
</dbReference>
<dbReference type="GO" id="GO:0005524">
    <property type="term" value="F:ATP binding"/>
    <property type="evidence" value="ECO:0007669"/>
    <property type="project" value="UniProtKB-UniRule"/>
</dbReference>
<dbReference type="GO" id="GO:0000287">
    <property type="term" value="F:magnesium ion binding"/>
    <property type="evidence" value="ECO:0007669"/>
    <property type="project" value="UniProtKB-UniRule"/>
</dbReference>
<dbReference type="GO" id="GO:0016783">
    <property type="term" value="F:sulfurtransferase activity"/>
    <property type="evidence" value="ECO:0007669"/>
    <property type="project" value="UniProtKB-UniRule"/>
</dbReference>
<dbReference type="GO" id="GO:0000049">
    <property type="term" value="F:tRNA binding"/>
    <property type="evidence" value="ECO:0007669"/>
    <property type="project" value="UniProtKB-KW"/>
</dbReference>
<dbReference type="GO" id="GO:0034227">
    <property type="term" value="P:tRNA thio-modification"/>
    <property type="evidence" value="ECO:0007669"/>
    <property type="project" value="UniProtKB-UniRule"/>
</dbReference>
<dbReference type="CDD" id="cd24138">
    <property type="entry name" value="TtcA-like"/>
    <property type="match status" value="1"/>
</dbReference>
<dbReference type="Gene3D" id="3.40.50.620">
    <property type="entry name" value="HUPs"/>
    <property type="match status" value="1"/>
</dbReference>
<dbReference type="HAMAP" id="MF_01850">
    <property type="entry name" value="TtcA"/>
    <property type="match status" value="1"/>
</dbReference>
<dbReference type="InterPro" id="IPR014729">
    <property type="entry name" value="Rossmann-like_a/b/a_fold"/>
</dbReference>
<dbReference type="InterPro" id="IPR011063">
    <property type="entry name" value="TilS/TtcA_N"/>
</dbReference>
<dbReference type="InterPro" id="IPR012089">
    <property type="entry name" value="tRNA_Cyd_32_2_STrfase"/>
</dbReference>
<dbReference type="InterPro" id="IPR035107">
    <property type="entry name" value="tRNA_thiolation_TtcA_Ctu1"/>
</dbReference>
<dbReference type="NCBIfam" id="NF007972">
    <property type="entry name" value="PRK10696.1"/>
    <property type="match status" value="1"/>
</dbReference>
<dbReference type="PANTHER" id="PTHR43686:SF1">
    <property type="entry name" value="AMINOTRAN_5 DOMAIN-CONTAINING PROTEIN"/>
    <property type="match status" value="1"/>
</dbReference>
<dbReference type="PANTHER" id="PTHR43686">
    <property type="entry name" value="SULFURTRANSFERASE-RELATED"/>
    <property type="match status" value="1"/>
</dbReference>
<dbReference type="Pfam" id="PF01171">
    <property type="entry name" value="ATP_bind_3"/>
    <property type="match status" value="1"/>
</dbReference>
<dbReference type="PIRSF" id="PIRSF004976">
    <property type="entry name" value="ATPase_YdaO"/>
    <property type="match status" value="1"/>
</dbReference>
<dbReference type="SUPFAM" id="SSF52402">
    <property type="entry name" value="Adenine nucleotide alpha hydrolases-like"/>
    <property type="match status" value="1"/>
</dbReference>
<evidence type="ECO:0000255" key="1">
    <source>
        <dbReference type="HAMAP-Rule" id="MF_01850"/>
    </source>
</evidence>
<accession>B0VT10</accession>
<sequence length="301" mass="34665">MYAPVESNEGFNFKPELPTSSAYYRLLKKLRRQVGHAIRDFNMIEDGDKVMVCVSGGKDSYTLLDILLQFKRIAPINFDIVAVNLDQKQPGFPEDVLPRYMEENNIPYYILEKDTYSITKRLTPEGKTYCAVCSRLRRGSLYGFAQEIGATKVALGHHRDDIIATFFLNLFHGGSLKAMPPKLLSSDKKNILIRPLAYVEEKDIIKYAELRKFPIIPCNLCGSQENLQRAMINEMLREWDRQYPKRLHSIFGALQNVSPSQLADRDLFDFEVLDSQRELDFKDPEELKKRLDVVNLSFAAE</sequence>
<keyword id="KW-0004">4Fe-4S</keyword>
<keyword id="KW-0067">ATP-binding</keyword>
<keyword id="KW-0963">Cytoplasm</keyword>
<keyword id="KW-0408">Iron</keyword>
<keyword id="KW-0411">Iron-sulfur</keyword>
<keyword id="KW-0460">Magnesium</keyword>
<keyword id="KW-0479">Metal-binding</keyword>
<keyword id="KW-0547">Nucleotide-binding</keyword>
<keyword id="KW-0694">RNA-binding</keyword>
<keyword id="KW-0808">Transferase</keyword>
<keyword id="KW-0819">tRNA processing</keyword>
<keyword id="KW-0820">tRNA-binding</keyword>
<organism>
    <name type="scientific">Acinetobacter baumannii (strain SDF)</name>
    <dbReference type="NCBI Taxonomy" id="509170"/>
    <lineage>
        <taxon>Bacteria</taxon>
        <taxon>Pseudomonadati</taxon>
        <taxon>Pseudomonadota</taxon>
        <taxon>Gammaproteobacteria</taxon>
        <taxon>Moraxellales</taxon>
        <taxon>Moraxellaceae</taxon>
        <taxon>Acinetobacter</taxon>
        <taxon>Acinetobacter calcoaceticus/baumannii complex</taxon>
    </lineage>
</organism>
<feature type="chain" id="PRO_1000188622" description="tRNA-cytidine(32) 2-sulfurtransferase">
    <location>
        <begin position="1"/>
        <end position="301"/>
    </location>
</feature>
<feature type="short sequence motif" description="PP-loop motif" evidence="1">
    <location>
        <begin position="55"/>
        <end position="60"/>
    </location>
</feature>
<feature type="binding site" evidence="1">
    <location>
        <position position="130"/>
    </location>
    <ligand>
        <name>[4Fe-4S] cluster</name>
        <dbReference type="ChEBI" id="CHEBI:49883"/>
    </ligand>
</feature>
<feature type="binding site" evidence="1">
    <location>
        <position position="133"/>
    </location>
    <ligand>
        <name>[4Fe-4S] cluster</name>
        <dbReference type="ChEBI" id="CHEBI:49883"/>
    </ligand>
</feature>
<feature type="binding site" evidence="1">
    <location>
        <position position="221"/>
    </location>
    <ligand>
        <name>[4Fe-4S] cluster</name>
        <dbReference type="ChEBI" id="CHEBI:49883"/>
    </ligand>
</feature>
<name>TTCA_ACIBS</name>